<comment type="function">
    <text evidence="1">Binding protein with a strong affinity to the bleomycin family of antibiotics, which confers resistance to these antibiotics by preventing the bleomycin-induced DNA breakage.</text>
</comment>
<comment type="similarity">
    <text evidence="3">Belongs to the bleomycin resistance protein family.</text>
</comment>
<comment type="sequence caution" evidence="3">
    <conflict type="erroneous initiation">
        <sequence resource="EMBL-CDS" id="CAG39061"/>
    </conflict>
</comment>
<name>BLE_STAAR</name>
<dbReference type="EMBL" id="BX571856">
    <property type="protein sequence ID" value="CAG39061.1"/>
    <property type="status" value="ALT_INIT"/>
    <property type="molecule type" value="Genomic_DNA"/>
</dbReference>
<dbReference type="SMR" id="Q6GKR3"/>
<dbReference type="KEGG" id="sar:SAR0032"/>
<dbReference type="HOGENOM" id="CLU_046006_15_5_9"/>
<dbReference type="Proteomes" id="UP000000596">
    <property type="component" value="Chromosome"/>
</dbReference>
<dbReference type="GO" id="GO:0046677">
    <property type="term" value="P:response to antibiotic"/>
    <property type="evidence" value="ECO:0007669"/>
    <property type="project" value="UniProtKB-KW"/>
</dbReference>
<dbReference type="CDD" id="cd08349">
    <property type="entry name" value="BLMA_like"/>
    <property type="match status" value="1"/>
</dbReference>
<dbReference type="Gene3D" id="3.10.180.10">
    <property type="entry name" value="2,3-Dihydroxybiphenyl 1,2-Dioxygenase, domain 1"/>
    <property type="match status" value="1"/>
</dbReference>
<dbReference type="InterPro" id="IPR000335">
    <property type="entry name" value="Bleomycin-R"/>
</dbReference>
<dbReference type="InterPro" id="IPR029068">
    <property type="entry name" value="Glyas_Bleomycin-R_OHBP_Dase"/>
</dbReference>
<dbReference type="InterPro" id="IPR004360">
    <property type="entry name" value="Glyas_Fos-R_dOase_dom"/>
</dbReference>
<dbReference type="InterPro" id="IPR037523">
    <property type="entry name" value="VOC"/>
</dbReference>
<dbReference type="NCBIfam" id="NF000027">
    <property type="entry name" value="156720500_bleO"/>
    <property type="match status" value="1"/>
</dbReference>
<dbReference type="Pfam" id="PF00903">
    <property type="entry name" value="Glyoxalase"/>
    <property type="match status" value="1"/>
</dbReference>
<dbReference type="PRINTS" id="PR00311">
    <property type="entry name" value="BLEOMYCINRST"/>
</dbReference>
<dbReference type="SUPFAM" id="SSF54593">
    <property type="entry name" value="Glyoxalase/Bleomycin resistance protein/Dihydroxybiphenyl dioxygenase"/>
    <property type="match status" value="1"/>
</dbReference>
<dbReference type="PROSITE" id="PS51819">
    <property type="entry name" value="VOC"/>
    <property type="match status" value="1"/>
</dbReference>
<proteinExistence type="inferred from homology"/>
<evidence type="ECO:0000250" key="1"/>
<evidence type="ECO:0000255" key="2">
    <source>
        <dbReference type="PROSITE-ProRule" id="PRU01163"/>
    </source>
</evidence>
<evidence type="ECO:0000305" key="3"/>
<keyword id="KW-0046">Antibiotic resistance</keyword>
<reference key="1">
    <citation type="journal article" date="2004" name="Proc. Natl. Acad. Sci. U.S.A.">
        <title>Complete genomes of two clinical Staphylococcus aureus strains: evidence for the rapid evolution of virulence and drug resistance.</title>
        <authorList>
            <person name="Holden M.T.G."/>
            <person name="Feil E.J."/>
            <person name="Lindsay J.A."/>
            <person name="Peacock S.J."/>
            <person name="Day N.P.J."/>
            <person name="Enright M.C."/>
            <person name="Foster T.J."/>
            <person name="Moore C.E."/>
            <person name="Hurst L."/>
            <person name="Atkin R."/>
            <person name="Barron A."/>
            <person name="Bason N."/>
            <person name="Bentley S.D."/>
            <person name="Chillingworth C."/>
            <person name="Chillingworth T."/>
            <person name="Churcher C."/>
            <person name="Clark L."/>
            <person name="Corton C."/>
            <person name="Cronin A."/>
            <person name="Doggett J."/>
            <person name="Dowd L."/>
            <person name="Feltwell T."/>
            <person name="Hance Z."/>
            <person name="Harris B."/>
            <person name="Hauser H."/>
            <person name="Holroyd S."/>
            <person name="Jagels K."/>
            <person name="James K.D."/>
            <person name="Lennard N."/>
            <person name="Line A."/>
            <person name="Mayes R."/>
            <person name="Moule S."/>
            <person name="Mungall K."/>
            <person name="Ormond D."/>
            <person name="Quail M.A."/>
            <person name="Rabbinowitsch E."/>
            <person name="Rutherford K.M."/>
            <person name="Sanders M."/>
            <person name="Sharp S."/>
            <person name="Simmonds M."/>
            <person name="Stevens K."/>
            <person name="Whitehead S."/>
            <person name="Barrell B.G."/>
            <person name="Spratt B.G."/>
            <person name="Parkhill J."/>
        </authorList>
    </citation>
    <scope>NUCLEOTIDE SEQUENCE [LARGE SCALE GENOMIC DNA]</scope>
    <source>
        <strain>MRSA252</strain>
    </source>
</reference>
<gene>
    <name type="primary">ble</name>
    <name type="ordered locus">SAR0032</name>
</gene>
<protein>
    <recommendedName>
        <fullName>Bleomycin resistance protein</fullName>
        <shortName>BRP</shortName>
    </recommendedName>
    <alternativeName>
        <fullName>Bleomycin-binding protein</fullName>
    </alternativeName>
</protein>
<organism>
    <name type="scientific">Staphylococcus aureus (strain MRSA252)</name>
    <dbReference type="NCBI Taxonomy" id="282458"/>
    <lineage>
        <taxon>Bacteria</taxon>
        <taxon>Bacillati</taxon>
        <taxon>Bacillota</taxon>
        <taxon>Bacilli</taxon>
        <taxon>Bacillales</taxon>
        <taxon>Staphylococcaceae</taxon>
        <taxon>Staphylococcus</taxon>
    </lineage>
</organism>
<sequence>MLQSIPALPVGDIKKSIGFYCDKLGFTLVHHEDGFAVLMCNEVRIHLWEASDEGWRSRSNDSPVCTGAESFIAGTASCRIEVEGIDELYQHIKPLGILHPNTSLKDQWWDERDFAVIDPDNNLISFFQQIKS</sequence>
<accession>Q6GKR3</accession>
<feature type="chain" id="PRO_0000300633" description="Bleomycin resistance protein">
    <location>
        <begin position="1"/>
        <end position="132"/>
    </location>
</feature>
<feature type="domain" description="VOC" evidence="2">
    <location>
        <begin position="1"/>
        <end position="129"/>
    </location>
</feature>